<proteinExistence type="inferred from homology"/>
<dbReference type="EC" id="3.2.1.85" evidence="1"/>
<dbReference type="EMBL" id="FM204884">
    <property type="protein sequence ID" value="CAX00199.1"/>
    <property type="molecule type" value="Genomic_DNA"/>
</dbReference>
<dbReference type="SMR" id="C0MDS5"/>
<dbReference type="KEGG" id="seq:SZO_15220"/>
<dbReference type="eggNOG" id="COG2723">
    <property type="taxonomic scope" value="Bacteria"/>
</dbReference>
<dbReference type="HOGENOM" id="CLU_001859_1_3_9"/>
<dbReference type="UniPathway" id="UPA00542">
    <property type="reaction ID" value="UER00605"/>
</dbReference>
<dbReference type="Proteomes" id="UP000001368">
    <property type="component" value="Chromosome"/>
</dbReference>
<dbReference type="GO" id="GO:0005829">
    <property type="term" value="C:cytosol"/>
    <property type="evidence" value="ECO:0007669"/>
    <property type="project" value="TreeGrafter"/>
</dbReference>
<dbReference type="GO" id="GO:0033920">
    <property type="term" value="F:6-phospho-beta-galactosidase activity"/>
    <property type="evidence" value="ECO:0007669"/>
    <property type="project" value="UniProtKB-UniRule"/>
</dbReference>
<dbReference type="GO" id="GO:0008422">
    <property type="term" value="F:beta-glucosidase activity"/>
    <property type="evidence" value="ECO:0007669"/>
    <property type="project" value="TreeGrafter"/>
</dbReference>
<dbReference type="GO" id="GO:0019512">
    <property type="term" value="P:lactose catabolic process via tagatose-6-phosphate"/>
    <property type="evidence" value="ECO:0007669"/>
    <property type="project" value="InterPro"/>
</dbReference>
<dbReference type="FunFam" id="3.20.20.80:FF:000004">
    <property type="entry name" value="Beta-glucosidase 6-phospho-beta-glucosidase"/>
    <property type="match status" value="1"/>
</dbReference>
<dbReference type="Gene3D" id="3.20.20.80">
    <property type="entry name" value="Glycosidases"/>
    <property type="match status" value="1"/>
</dbReference>
<dbReference type="HAMAP" id="MF_01574">
    <property type="entry name" value="LacG"/>
    <property type="match status" value="1"/>
</dbReference>
<dbReference type="InterPro" id="IPR005928">
    <property type="entry name" value="6P-beta-galactosidase"/>
</dbReference>
<dbReference type="InterPro" id="IPR001360">
    <property type="entry name" value="Glyco_hydro_1"/>
</dbReference>
<dbReference type="InterPro" id="IPR018120">
    <property type="entry name" value="Glyco_hydro_1_AS"/>
</dbReference>
<dbReference type="InterPro" id="IPR033132">
    <property type="entry name" value="Glyco_hydro_1_N_CS"/>
</dbReference>
<dbReference type="InterPro" id="IPR017853">
    <property type="entry name" value="Glycoside_hydrolase_SF"/>
</dbReference>
<dbReference type="NCBIfam" id="TIGR01233">
    <property type="entry name" value="lacG"/>
    <property type="match status" value="1"/>
</dbReference>
<dbReference type="NCBIfam" id="NF010036">
    <property type="entry name" value="PRK13511.1"/>
    <property type="match status" value="1"/>
</dbReference>
<dbReference type="PANTHER" id="PTHR10353">
    <property type="entry name" value="GLYCOSYL HYDROLASE"/>
    <property type="match status" value="1"/>
</dbReference>
<dbReference type="PANTHER" id="PTHR10353:SF36">
    <property type="entry name" value="LP05116P"/>
    <property type="match status" value="1"/>
</dbReference>
<dbReference type="Pfam" id="PF00232">
    <property type="entry name" value="Glyco_hydro_1"/>
    <property type="match status" value="1"/>
</dbReference>
<dbReference type="PRINTS" id="PR00131">
    <property type="entry name" value="GLHYDRLASE1"/>
</dbReference>
<dbReference type="SUPFAM" id="SSF51445">
    <property type="entry name" value="(Trans)glycosidases"/>
    <property type="match status" value="1"/>
</dbReference>
<dbReference type="PROSITE" id="PS00572">
    <property type="entry name" value="GLYCOSYL_HYDROL_F1_1"/>
    <property type="match status" value="1"/>
</dbReference>
<dbReference type="PROSITE" id="PS00653">
    <property type="entry name" value="GLYCOSYL_HYDROL_F1_2"/>
    <property type="match status" value="1"/>
</dbReference>
<keyword id="KW-0326">Glycosidase</keyword>
<keyword id="KW-0378">Hydrolase</keyword>
<comment type="catalytic activity">
    <reaction evidence="1">
        <text>a 6-phospho-beta-D-galactoside + H2O = D-galactose 6-phosphate + an alcohol</text>
        <dbReference type="Rhea" id="RHEA:24568"/>
        <dbReference type="ChEBI" id="CHEBI:15377"/>
        <dbReference type="ChEBI" id="CHEBI:30879"/>
        <dbReference type="ChEBI" id="CHEBI:58534"/>
        <dbReference type="ChEBI" id="CHEBI:91004"/>
        <dbReference type="EC" id="3.2.1.85"/>
    </reaction>
</comment>
<comment type="pathway">
    <text evidence="1">Carbohydrate metabolism; lactose degradation; D-galactose 6-phosphate and beta-D-glucose from lactose 6-phosphate: step 1/1.</text>
</comment>
<comment type="similarity">
    <text evidence="1">Belongs to the glycosyl hydrolase 1 family.</text>
</comment>
<gene>
    <name evidence="1" type="primary">lacG</name>
    <name type="ordered locus">SZO_15220</name>
</gene>
<name>LACG_STRS7</name>
<feature type="chain" id="PRO_1000215584" description="6-phospho-beta-galactosidase">
    <location>
        <begin position="1"/>
        <end position="469"/>
    </location>
</feature>
<feature type="active site" description="Proton donor" evidence="1">
    <location>
        <position position="160"/>
    </location>
</feature>
<feature type="active site" description="Nucleophile" evidence="1">
    <location>
        <position position="375"/>
    </location>
</feature>
<feature type="binding site" evidence="1">
    <location>
        <position position="19"/>
    </location>
    <ligand>
        <name>D-galactose 6-phosphate</name>
        <dbReference type="ChEBI" id="CHEBI:91004"/>
    </ligand>
</feature>
<feature type="binding site" evidence="1">
    <location>
        <position position="116"/>
    </location>
    <ligand>
        <name>D-galactose 6-phosphate</name>
        <dbReference type="ChEBI" id="CHEBI:91004"/>
    </ligand>
</feature>
<feature type="binding site" evidence="1">
    <location>
        <position position="159"/>
    </location>
    <ligand>
        <name>D-galactose 6-phosphate</name>
        <dbReference type="ChEBI" id="CHEBI:91004"/>
    </ligand>
</feature>
<feature type="binding site" evidence="1">
    <location>
        <position position="160"/>
    </location>
    <ligand>
        <name>D-galactose 6-phosphate</name>
        <dbReference type="ChEBI" id="CHEBI:91004"/>
    </ligand>
</feature>
<feature type="binding site" evidence="1">
    <location>
        <position position="297"/>
    </location>
    <ligand>
        <name>D-galactose 6-phosphate</name>
        <dbReference type="ChEBI" id="CHEBI:91004"/>
    </ligand>
</feature>
<feature type="binding site" evidence="1">
    <location>
        <position position="428"/>
    </location>
    <ligand>
        <name>D-galactose 6-phosphate</name>
        <dbReference type="ChEBI" id="CHEBI:91004"/>
    </ligand>
</feature>
<feature type="binding site" evidence="1">
    <location>
        <position position="429"/>
    </location>
    <ligand>
        <name>D-galactose 6-phosphate</name>
        <dbReference type="ChEBI" id="CHEBI:91004"/>
    </ligand>
</feature>
<feature type="binding site" evidence="1">
    <location>
        <position position="435"/>
    </location>
    <ligand>
        <name>D-galactose 6-phosphate</name>
        <dbReference type="ChEBI" id="CHEBI:91004"/>
    </ligand>
</feature>
<feature type="binding site" evidence="1">
    <location>
        <position position="437"/>
    </location>
    <ligand>
        <name>D-galactose 6-phosphate</name>
        <dbReference type="ChEBI" id="CHEBI:91004"/>
    </ligand>
</feature>
<organism>
    <name type="scientific">Streptococcus equi subsp. zooepidemicus (strain H70)</name>
    <dbReference type="NCBI Taxonomy" id="553483"/>
    <lineage>
        <taxon>Bacteria</taxon>
        <taxon>Bacillati</taxon>
        <taxon>Bacillota</taxon>
        <taxon>Bacilli</taxon>
        <taxon>Lactobacillales</taxon>
        <taxon>Streptococcaceae</taxon>
        <taxon>Streptococcus</taxon>
    </lineage>
</organism>
<sequence length="469" mass="53509">MIKRLPDDFIFGGATAAYQAEGATTIDGKGAVAWDRYLKDNYWYTAEPASDFYHQYPVDLALAEQFGINGIRISIAWSRIFPEGFGEVNAKGVAFYHSLFAECHKHHVEPFVTLHHFDTPEALHSRGDFLNRENIDHFVAYAAYCFKEFPEVTYWTTFNEIGPIGDGQYLVGKFPPGISYDLAKVFQSHHNMMLAHARALVHYKEQAYPGEIGIVHALPTKYPLDPKKPGDVLAAELDDIIHNKFILDATYLGQYSEKTMAGVKHILAENGGSLDLRPEDFELLQAAKDLNDFLGINYYMSDWLRAFDGETEIIHNGKGEKGGSKYQIKGVGQRVFDVDVPRTDWDWMIYPQGLYDQIMRIKADYPGYKKIYITENGLGYKDTCIDGRIDDDARIDYIKQHLAVIADAISTGANVKGYFIWSLMDVFSWSNGYDKRYGLFYVDFETQKRYPKKSAYWYQQLAATKTISM</sequence>
<evidence type="ECO:0000255" key="1">
    <source>
        <dbReference type="HAMAP-Rule" id="MF_01574"/>
    </source>
</evidence>
<accession>C0MDS5</accession>
<protein>
    <recommendedName>
        <fullName evidence="1">6-phospho-beta-galactosidase</fullName>
        <ecNumber evidence="1">3.2.1.85</ecNumber>
    </recommendedName>
    <alternativeName>
        <fullName evidence="1">Beta-D-phosphogalactoside galactohydrolase</fullName>
        <shortName evidence="1">PGALase</shortName>
    </alternativeName>
    <alternativeName>
        <fullName evidence="1">P-beta-Gal</fullName>
        <shortName evidence="1">PBG</shortName>
    </alternativeName>
</protein>
<reference key="1">
    <citation type="journal article" date="2009" name="PLoS Pathog.">
        <title>Genomic evidence for the evolution of Streptococcus equi: host restriction, increased virulence, and genetic exchange with human pathogens.</title>
        <authorList>
            <person name="Holden M.T.G."/>
            <person name="Heather Z."/>
            <person name="Paillot R."/>
            <person name="Steward K.F."/>
            <person name="Webb K."/>
            <person name="Ainslie F."/>
            <person name="Jourdan T."/>
            <person name="Bason N.C."/>
            <person name="Holroyd N.E."/>
            <person name="Mungall K."/>
            <person name="Quail M.A."/>
            <person name="Sanders M."/>
            <person name="Simmonds M."/>
            <person name="Willey D."/>
            <person name="Brooks K."/>
            <person name="Aanensen D.M."/>
            <person name="Spratt B.G."/>
            <person name="Jolley K.A."/>
            <person name="Maiden M.C.J."/>
            <person name="Kehoe M."/>
            <person name="Chanter N."/>
            <person name="Bentley S.D."/>
            <person name="Robinson C."/>
            <person name="Maskell D.J."/>
            <person name="Parkhill J."/>
            <person name="Waller A.S."/>
        </authorList>
    </citation>
    <scope>NUCLEOTIDE SEQUENCE [LARGE SCALE GENOMIC DNA]</scope>
    <source>
        <strain>H70</strain>
    </source>
</reference>